<proteinExistence type="evidence at protein level"/>
<name>FCRL6_HUMAN</name>
<dbReference type="EMBL" id="AY513661">
    <property type="protein sequence ID" value="AAS82876.1"/>
    <property type="molecule type" value="mRNA"/>
</dbReference>
<dbReference type="EMBL" id="AY212514">
    <property type="protein sequence ID" value="AAP47270.1"/>
    <property type="molecule type" value="mRNA"/>
</dbReference>
<dbReference type="EMBL" id="AY654627">
    <property type="protein sequence ID" value="AAT66024.1"/>
    <property type="molecule type" value="mRNA"/>
</dbReference>
<dbReference type="EMBL" id="AY654628">
    <property type="protein sequence ID" value="AAT66025.1"/>
    <property type="molecule type" value="mRNA"/>
</dbReference>
<dbReference type="EMBL" id="AK131201">
    <property type="protein sequence ID" value="BAD18394.1"/>
    <property type="molecule type" value="mRNA"/>
</dbReference>
<dbReference type="EMBL" id="AL590560">
    <property type="status" value="NOT_ANNOTATED_CDS"/>
    <property type="molecule type" value="Genomic_DNA"/>
</dbReference>
<dbReference type="CCDS" id="CCDS30912.1">
    <molecule id="Q6DN72-1"/>
</dbReference>
<dbReference type="CCDS" id="CCDS60312.1">
    <molecule id="Q6DN72-2"/>
</dbReference>
<dbReference type="RefSeq" id="NP_001004310.2">
    <molecule id="Q6DN72-1"/>
    <property type="nucleotide sequence ID" value="NM_001004310.3"/>
</dbReference>
<dbReference type="RefSeq" id="NP_001271146.1">
    <molecule id="Q6DN72-2"/>
    <property type="nucleotide sequence ID" value="NM_001284217.2"/>
</dbReference>
<dbReference type="SMR" id="Q6DN72"/>
<dbReference type="BioGRID" id="131251">
    <property type="interactions" value="2"/>
</dbReference>
<dbReference type="FunCoup" id="Q6DN72">
    <property type="interactions" value="328"/>
</dbReference>
<dbReference type="IntAct" id="Q6DN72">
    <property type="interactions" value="1"/>
</dbReference>
<dbReference type="STRING" id="9606.ENSP00000357086"/>
<dbReference type="GlyCosmos" id="Q6DN72">
    <property type="glycosylation" value="2 sites, No reported glycans"/>
</dbReference>
<dbReference type="GlyGen" id="Q6DN72">
    <property type="glycosylation" value="3 sites"/>
</dbReference>
<dbReference type="iPTMnet" id="Q6DN72"/>
<dbReference type="PhosphoSitePlus" id="Q6DN72"/>
<dbReference type="BioMuta" id="FCRL6"/>
<dbReference type="DMDM" id="134034126"/>
<dbReference type="MassIVE" id="Q6DN72"/>
<dbReference type="PaxDb" id="9606-ENSP00000357086"/>
<dbReference type="PeptideAtlas" id="Q6DN72"/>
<dbReference type="ProteomicsDB" id="66248">
    <molecule id="Q6DN72-1"/>
</dbReference>
<dbReference type="ProteomicsDB" id="66249">
    <molecule id="Q6DN72-2"/>
</dbReference>
<dbReference type="ProteomicsDB" id="66250">
    <molecule id="Q6DN72-3"/>
</dbReference>
<dbReference type="TopDownProteomics" id="Q6DN72-3">
    <molecule id="Q6DN72-3"/>
</dbReference>
<dbReference type="Antibodypedia" id="47058">
    <property type="antibodies" value="83 antibodies from 14 providers"/>
</dbReference>
<dbReference type="DNASU" id="343413"/>
<dbReference type="Ensembl" id="ENST00000321935.10">
    <molecule id="Q6DN72-2"/>
    <property type="protein sequence ID" value="ENSP00000320625.6"/>
    <property type="gene ID" value="ENSG00000181036.14"/>
</dbReference>
<dbReference type="Ensembl" id="ENST00000339348.9">
    <molecule id="Q6DN72-3"/>
    <property type="protein sequence ID" value="ENSP00000340949.5"/>
    <property type="gene ID" value="ENSG00000181036.14"/>
</dbReference>
<dbReference type="Ensembl" id="ENST00000368106.4">
    <molecule id="Q6DN72-1"/>
    <property type="protein sequence ID" value="ENSP00000357086.3"/>
    <property type="gene ID" value="ENSG00000181036.14"/>
</dbReference>
<dbReference type="Ensembl" id="ENST00000392235.7">
    <molecule id="Q6DN72-4"/>
    <property type="protein sequence ID" value="ENSP00000376068.3"/>
    <property type="gene ID" value="ENSG00000181036.14"/>
</dbReference>
<dbReference type="GeneID" id="343413"/>
<dbReference type="KEGG" id="hsa:343413"/>
<dbReference type="MANE-Select" id="ENST00000368106.4">
    <property type="protein sequence ID" value="ENSP00000357086.3"/>
    <property type="RefSeq nucleotide sequence ID" value="NM_001004310.3"/>
    <property type="RefSeq protein sequence ID" value="NP_001004310.2"/>
</dbReference>
<dbReference type="UCSC" id="uc001fuc.4">
    <molecule id="Q6DN72-1"/>
    <property type="organism name" value="human"/>
</dbReference>
<dbReference type="AGR" id="HGNC:31910"/>
<dbReference type="CTD" id="343413"/>
<dbReference type="DisGeNET" id="343413"/>
<dbReference type="GeneCards" id="FCRL6"/>
<dbReference type="HGNC" id="HGNC:31910">
    <property type="gene designation" value="FCRL6"/>
</dbReference>
<dbReference type="HPA" id="ENSG00000181036">
    <property type="expression patterns" value="Tissue enhanced (bone marrow, lymphoid tissue)"/>
</dbReference>
<dbReference type="MIM" id="613562">
    <property type="type" value="gene"/>
</dbReference>
<dbReference type="neXtProt" id="NX_Q6DN72"/>
<dbReference type="OpenTargets" id="ENSG00000181036"/>
<dbReference type="PharmGKB" id="PA142671770"/>
<dbReference type="VEuPathDB" id="HostDB:ENSG00000181036"/>
<dbReference type="eggNOG" id="ENOG502RU0I">
    <property type="taxonomic scope" value="Eukaryota"/>
</dbReference>
<dbReference type="GeneTree" id="ENSGT01050000244808"/>
<dbReference type="HOGENOM" id="CLU_023383_5_0_1"/>
<dbReference type="InParanoid" id="Q6DN72"/>
<dbReference type="OMA" id="GTQRSEM"/>
<dbReference type="OrthoDB" id="9950534at2759"/>
<dbReference type="PAN-GO" id="Q6DN72">
    <property type="GO annotations" value="3 GO annotations based on evolutionary models"/>
</dbReference>
<dbReference type="PhylomeDB" id="Q6DN72"/>
<dbReference type="TreeFam" id="TF335097"/>
<dbReference type="PathwayCommons" id="Q6DN72"/>
<dbReference type="SignaLink" id="Q6DN72"/>
<dbReference type="SIGNOR" id="Q6DN72"/>
<dbReference type="BioGRID-ORCS" id="343413">
    <property type="hits" value="7 hits in 1132 CRISPR screens"/>
</dbReference>
<dbReference type="GenomeRNAi" id="343413"/>
<dbReference type="Pharos" id="Q6DN72">
    <property type="development level" value="Tbio"/>
</dbReference>
<dbReference type="PRO" id="PR:Q6DN72"/>
<dbReference type="Proteomes" id="UP000005640">
    <property type="component" value="Chromosome 1"/>
</dbReference>
<dbReference type="RNAct" id="Q6DN72">
    <property type="molecule type" value="protein"/>
</dbReference>
<dbReference type="Bgee" id="ENSG00000181036">
    <property type="expression patterns" value="Expressed in granulocyte and 103 other cell types or tissues"/>
</dbReference>
<dbReference type="ExpressionAtlas" id="Q6DN72">
    <property type="expression patterns" value="baseline and differential"/>
</dbReference>
<dbReference type="GO" id="GO:0009897">
    <property type="term" value="C:external side of plasma membrane"/>
    <property type="evidence" value="ECO:0000314"/>
    <property type="project" value="MGI"/>
</dbReference>
<dbReference type="GO" id="GO:0005886">
    <property type="term" value="C:plasma membrane"/>
    <property type="evidence" value="ECO:0000314"/>
    <property type="project" value="UniProtKB"/>
</dbReference>
<dbReference type="GO" id="GO:0042289">
    <property type="term" value="F:MHC class II protein binding"/>
    <property type="evidence" value="ECO:0000314"/>
    <property type="project" value="UniProtKB"/>
</dbReference>
<dbReference type="GO" id="GO:0019902">
    <property type="term" value="F:phosphatase binding"/>
    <property type="evidence" value="ECO:0000353"/>
    <property type="project" value="UniProtKB"/>
</dbReference>
<dbReference type="GO" id="GO:0019903">
    <property type="term" value="F:protein phosphatase binding"/>
    <property type="evidence" value="ECO:0000353"/>
    <property type="project" value="UniProtKB"/>
</dbReference>
<dbReference type="GO" id="GO:0004888">
    <property type="term" value="F:transmembrane signaling receptor activity"/>
    <property type="evidence" value="ECO:0000318"/>
    <property type="project" value="GO_Central"/>
</dbReference>
<dbReference type="GO" id="GO:0007166">
    <property type="term" value="P:cell surface receptor signaling pathway"/>
    <property type="evidence" value="ECO:0000318"/>
    <property type="project" value="GO_Central"/>
</dbReference>
<dbReference type="GO" id="GO:0006955">
    <property type="term" value="P:immune response"/>
    <property type="evidence" value="ECO:0000318"/>
    <property type="project" value="GO_Central"/>
</dbReference>
<dbReference type="CDD" id="cd00096">
    <property type="entry name" value="Ig"/>
    <property type="match status" value="1"/>
</dbReference>
<dbReference type="CDD" id="cd05753">
    <property type="entry name" value="Ig2_FcgammaR_like"/>
    <property type="match status" value="1"/>
</dbReference>
<dbReference type="FunFam" id="2.60.40.10:FF:000357">
    <property type="entry name" value="Fc receptor like 1"/>
    <property type="match status" value="1"/>
</dbReference>
<dbReference type="FunFam" id="2.60.40.10:FF:000651">
    <property type="entry name" value="Fc receptor like 1"/>
    <property type="match status" value="1"/>
</dbReference>
<dbReference type="FunFam" id="2.60.40.10:FF:000217">
    <property type="entry name" value="High affinity immunoglobulin gamma Fc receptor I"/>
    <property type="match status" value="1"/>
</dbReference>
<dbReference type="Gene3D" id="2.60.40.10">
    <property type="entry name" value="Immunoglobulins"/>
    <property type="match status" value="3"/>
</dbReference>
<dbReference type="InterPro" id="IPR007110">
    <property type="entry name" value="Ig-like_dom"/>
</dbReference>
<dbReference type="InterPro" id="IPR036179">
    <property type="entry name" value="Ig-like_dom_sf"/>
</dbReference>
<dbReference type="InterPro" id="IPR013783">
    <property type="entry name" value="Ig-like_fold"/>
</dbReference>
<dbReference type="InterPro" id="IPR050488">
    <property type="entry name" value="Ig_Fc_receptor"/>
</dbReference>
<dbReference type="InterPro" id="IPR003599">
    <property type="entry name" value="Ig_sub"/>
</dbReference>
<dbReference type="InterPro" id="IPR003598">
    <property type="entry name" value="Ig_sub2"/>
</dbReference>
<dbReference type="PANTHER" id="PTHR11481:SF117">
    <property type="entry name" value="FC RECEPTOR-LIKE PROTEIN 1"/>
    <property type="match status" value="1"/>
</dbReference>
<dbReference type="PANTHER" id="PTHR11481">
    <property type="entry name" value="IMMUNOGLOBULIN FC RECEPTOR"/>
    <property type="match status" value="1"/>
</dbReference>
<dbReference type="Pfam" id="PF13895">
    <property type="entry name" value="Ig_2"/>
    <property type="match status" value="2"/>
</dbReference>
<dbReference type="Pfam" id="PF13927">
    <property type="entry name" value="Ig_3"/>
    <property type="match status" value="1"/>
</dbReference>
<dbReference type="SMART" id="SM00409">
    <property type="entry name" value="IG"/>
    <property type="match status" value="3"/>
</dbReference>
<dbReference type="SMART" id="SM00408">
    <property type="entry name" value="IGc2"/>
    <property type="match status" value="3"/>
</dbReference>
<dbReference type="SUPFAM" id="SSF48726">
    <property type="entry name" value="Immunoglobulin"/>
    <property type="match status" value="3"/>
</dbReference>
<dbReference type="PROSITE" id="PS50835">
    <property type="entry name" value="IG_LIKE"/>
    <property type="match status" value="3"/>
</dbReference>
<accession>Q6DN72</accession>
<accession>A1KXW6</accession>
<accession>A2A4D6</accession>
<accession>Q6DN73</accession>
<accession>Q6XRC3</accession>
<accession>Q6ZNI1</accession>
<organism>
    <name type="scientific">Homo sapiens</name>
    <name type="common">Human</name>
    <dbReference type="NCBI Taxonomy" id="9606"/>
    <lineage>
        <taxon>Eukaryota</taxon>
        <taxon>Metazoa</taxon>
        <taxon>Chordata</taxon>
        <taxon>Craniata</taxon>
        <taxon>Vertebrata</taxon>
        <taxon>Euteleostomi</taxon>
        <taxon>Mammalia</taxon>
        <taxon>Eutheria</taxon>
        <taxon>Euarchontoglires</taxon>
        <taxon>Primates</taxon>
        <taxon>Haplorrhini</taxon>
        <taxon>Catarrhini</taxon>
        <taxon>Hominidae</taxon>
        <taxon>Homo</taxon>
    </lineage>
</organism>
<evidence type="ECO:0000255" key="1"/>
<evidence type="ECO:0000255" key="2">
    <source>
        <dbReference type="PROSITE-ProRule" id="PRU00114"/>
    </source>
</evidence>
<evidence type="ECO:0000269" key="3">
    <source>
    </source>
</evidence>
<evidence type="ECO:0000269" key="4">
    <source>
    </source>
</evidence>
<evidence type="ECO:0000269" key="5">
    <source>
    </source>
</evidence>
<evidence type="ECO:0000269" key="6">
    <source>
    </source>
</evidence>
<evidence type="ECO:0000303" key="7">
    <source>
    </source>
</evidence>
<evidence type="ECO:0000303" key="8">
    <source>
    </source>
</evidence>
<evidence type="ECO:0000303" key="9">
    <source ref="2"/>
</evidence>
<evidence type="ECO:0000305" key="10"/>
<comment type="function">
    <text evidence="3 4 5">Acts as a MHC class II receptor (PubMed:20519654). When stimulated on its own, does not play a role in cytokine production or the release of cytotoxic granules by NK cells and cytotoxic CD8(+) T cells (PubMed:17213291, PubMed:18991291). Does not act as an Fc receptor (PubMed:18991291).</text>
</comment>
<comment type="subunit">
    <text evidence="3 5 6">Interacts (tyrosine phosphorylated) with PTPN11 (PubMed:17213291, PubMed:20933011). Interacts (tyrosine phosphorylated) with PTPN6, INPP5D, INPPL1 and GRB2 (PubMed:20933011). Interacts with class II MHC HLA-DR when the alpha chain is associated with a beta-1, beta-4 or a beta-5 but not a beta-3 chain (PubMed:20519654).</text>
</comment>
<comment type="interaction">
    <interactant intactId="EBI-23889796">
        <id>Q6DN72</id>
    </interactant>
    <interactant intactId="EBI-3925203">
        <id>Q8N3T1</id>
        <label>GALNT15</label>
    </interactant>
    <organismsDiffer>false</organismsDiffer>
    <experiments>3</experiments>
</comment>
<comment type="subcellular location">
    <subcellularLocation>
        <location evidence="4 6">Cell membrane</location>
        <topology evidence="10">Single-pass type I membrane protein</topology>
    </subcellularLocation>
</comment>
<comment type="alternative products">
    <event type="alternative splicing"/>
    <isoform>
        <id>Q6DN72-1</id>
        <name>1</name>
        <name evidence="8">FCRL6v1</name>
        <sequence type="displayed"/>
    </isoform>
    <isoform>
        <id>Q6DN72-2</id>
        <name>2</name>
        <sequence type="described" ref="VSP_023565 VSP_023568 VSP_023570"/>
    </isoform>
    <isoform>
        <id>Q6DN72-3</id>
        <name>3</name>
        <name evidence="8">FCRL6v4</name>
        <sequence type="described" ref="VSP_023567 VSP_023569"/>
    </isoform>
    <isoform>
        <id>Q6DN72-4</id>
        <name>4</name>
        <sequence type="described" ref="VSP_023566 VSP_023568 VSP_023570"/>
    </isoform>
</comment>
<comment type="tissue specificity">
    <text evidence="3 4 6">Expressed by cytolytic cells including NK cells, effector and effector-memory CD8(+) T-cells, and a subset of NKT cells (at protein level) (PubMed:17213291, PubMed:18991291, PubMed:20933011). Also expressed in gamma delta T cells and in a rare subset of effector CD4(+) T-cells (at protein level) (PubMed:18991291). Expressed in spleen, skin, peripheral blood leukocytes, liver, lung, bone marrow, small intestine and placenta (PubMed:20933011). Expression among T-cells is greatly expanded in HIV-1 infected individuals, and includes not only effector and effector-memory CD8(+) T-cells but also populations of CD4(+) T-cells (PubMed:17213291, PubMed:20933011). Expression among CD8(+) T-cells and NK cells is expanded in individuals with chronic lymphocytic leukemia (CLL) but is reduced in PBMCs from patients with acute (AML), chronic myeloid leukemia (CML) and non-Hodgkin's lymphoma (PubMed:18991291, PubMed:20933011). Expression is higher in PBMCs and/or CD3(+) cells of patients with autoimmune diseases, such as rheumatoid arthritis (RA), systemic lupus erythematosus (SLE) and idiopathic thrombocytopenia purpura (ITP) (PubMed:20933011). In contrast, expression in CD3(+) cells from patients with lupus anticoagulans (LA) is higher (PubMed:20933011).</text>
</comment>
<comment type="induction">
    <text evidence="6">Down-regulated upon stimulation with mitogen phytohaemagglutinin (PHA) or concavalin A in peripheral blood mononuclear cells (PBMCs).</text>
</comment>
<comment type="domain">
    <text evidence="3">Contains 1 copy of a cytoplasmic motif that is referred to as the immunoreceptor tyrosine-based inhibitor motif (ITIM). The phosphorylated ITIM motif is involved in PTPN11 binding.</text>
</comment>
<comment type="PTM">
    <text evidence="3 4">Phosphorylated on Tyr residues. Tyrosine phosphorylation induces association with phosphatase PTPN11, PTPN6, INPP5D, INPPL1 and GRB2.</text>
</comment>
<feature type="signal peptide" evidence="1">
    <location>
        <begin position="1"/>
        <end position="19"/>
    </location>
</feature>
<feature type="chain" id="PRO_0000280213" description="Fc receptor-like protein 6">
    <location>
        <begin position="20"/>
        <end position="434"/>
    </location>
</feature>
<feature type="topological domain" description="Extracellular" evidence="1">
    <location>
        <begin position="20"/>
        <end position="307"/>
    </location>
</feature>
<feature type="transmembrane region" description="Helical" evidence="1">
    <location>
        <begin position="308"/>
        <end position="328"/>
    </location>
</feature>
<feature type="topological domain" description="Cytoplasmic" evidence="1">
    <location>
        <begin position="329"/>
        <end position="434"/>
    </location>
</feature>
<feature type="domain" description="Ig-like C2-type 1">
    <location>
        <begin position="20"/>
        <end position="95"/>
    </location>
</feature>
<feature type="domain" description="Ig-like C2-type 2">
    <location>
        <begin position="111"/>
        <end position="197"/>
    </location>
</feature>
<feature type="domain" description="Ig-like C2-type 3">
    <location>
        <begin position="207"/>
        <end position="293"/>
    </location>
</feature>
<feature type="short sequence motif" description="ITIM motif">
    <location>
        <begin position="369"/>
        <end position="374"/>
    </location>
</feature>
<feature type="modified residue" description="Phosphotyrosine" evidence="3">
    <location>
        <position position="371"/>
    </location>
</feature>
<feature type="glycosylation site" description="N-linked (GlcNAc...) asparagine" evidence="1">
    <location>
        <position position="65"/>
    </location>
</feature>
<feature type="glycosylation site" description="N-linked (GlcNAc...) asparagine" evidence="1">
    <location>
        <position position="273"/>
    </location>
</feature>
<feature type="disulfide bond" evidence="2">
    <location>
        <begin position="39"/>
        <end position="83"/>
    </location>
</feature>
<feature type="disulfide bond" evidence="2">
    <location>
        <begin position="132"/>
        <end position="180"/>
    </location>
</feature>
<feature type="disulfide bond" evidence="2">
    <location>
        <begin position="228"/>
        <end position="276"/>
    </location>
</feature>
<feature type="splice variant" id="VSP_023565" description="In isoform 2." evidence="7">
    <original>M</original>
    <variation>MLPSLGPM</variation>
    <location>
        <position position="1"/>
    </location>
</feature>
<feature type="splice variant" id="VSP_023566" description="In isoform 4." evidence="9">
    <location>
        <begin position="105"/>
        <end position="199"/>
    </location>
</feature>
<feature type="splice variant" id="VSP_023567" description="In isoform 3." evidence="9">
    <original>ARSAEFTVGRKDSSI</original>
    <variation>GQFYHLCGGEMPAAQ</variation>
    <location>
        <begin position="383"/>
        <end position="397"/>
    </location>
</feature>
<feature type="splice variant" id="VSP_023568" description="In isoform 2 and isoform 4." evidence="7 9">
    <original>DSSIICAEVRCLQ</original>
    <variation>FYHLCGGEMPAAQ</variation>
    <location>
        <begin position="394"/>
        <end position="406"/>
    </location>
</feature>
<feature type="splice variant" id="VSP_023569" description="In isoform 3." evidence="9">
    <location>
        <begin position="398"/>
        <end position="434"/>
    </location>
</feature>
<feature type="splice variant" id="VSP_023570" description="In isoform 2 and isoform 4." evidence="7 9">
    <location>
        <begin position="407"/>
        <end position="434"/>
    </location>
</feature>
<feature type="sequence variant" id="VAR_031090" description="In dbSNP:rs4443889.">
    <original>S</original>
    <variation>G</variation>
    <location>
        <position position="427"/>
    </location>
</feature>
<feature type="mutagenesis site" description="No change of phosphorylation implicated in interaction with PTPN11. Loss of interaction with INPPD5, INPPL1 and GRB2." evidence="3 6">
    <original>Y</original>
    <variation>F</variation>
    <location>
        <position position="356"/>
    </location>
</feature>
<feature type="mutagenesis site" description="Loss of phosphorylation implicated in interaction with PTPN11. Loss of interaction with PTPN11, PTPN6 and INPPL1." evidence="3 6">
    <original>Y</original>
    <variation>F</variation>
    <location>
        <position position="371"/>
    </location>
</feature>
<feature type="sequence conflict" description="In Ref. 2; AAP47270." evidence="10" ref="2">
    <original>KF</original>
    <variation>RL</variation>
    <location>
        <begin position="51"/>
        <end position="52"/>
    </location>
</feature>
<feature type="sequence conflict" description="In Ref. 2; AAP47270." evidence="10" ref="2">
    <original>L</original>
    <variation>P</variation>
    <location>
        <position position="59"/>
    </location>
</feature>
<feature type="sequence conflict" description="In Ref. 2; AAP47270." evidence="10" ref="2">
    <original>L</original>
    <variation>P</variation>
    <location>
        <position position="114"/>
    </location>
</feature>
<feature type="sequence conflict" description="In Ref. 2; AAP47270." evidence="10" ref="2">
    <original>R</original>
    <variation>Q</variation>
    <location>
        <position position="123"/>
    </location>
</feature>
<feature type="sequence conflict" description="In Ref. 2; AAT66025." evidence="10" ref="2">
    <original>N</original>
    <variation>S</variation>
    <location>
        <position position="250"/>
    </location>
</feature>
<sequence>MLLWTAVLLFVPCVGKTVWLYLQAWPNPVFEGDALTLRCQGWKNTPLSQVKFYRDGKFLHFSKENQTLSMGAATVQSRGQYSCSGQVMYIPQTFTQTSETAMVQVQELFPPPVLSAIPSPEPREGSLVTLRCQTKLHPLRSALRLLFSFHKDGHTLQDRGPHPELCIPGAKEGDSGLYWCEVAPEGGQVQKQSPQLEVRVQAPVSRPVLTLHHGPADPAVGDMVQLLCEAQRGSPPILYSFYLDEKIVGNHSAPCGGTTSLLFPVKSEQDAGNYSCEAENSVSRERSEPKKLSLKGSQVLFTPASNWLVPWLPASLLGLMVIAAALLVYVRSWRKAGPLPSQIPPTAPGGEQCPLYANVHHQKGKDEGVVYSVVHRTSKRSEARSAEFTVGRKDSSIICAEVRCLQPSEVSSTEVNMRSRTLQEPLSDCEEVLC</sequence>
<reference key="1">
    <citation type="journal article" date="2007" name="Blood">
        <title>FcRL6, a new ITIM-bearing receptor on cytolytic cells, is broadly expressed by lymphocytes following HIV-1 infection.</title>
        <authorList>
            <person name="Wilson T.J."/>
            <person name="Presti R.M."/>
            <person name="Tassi I."/>
            <person name="Overton E.T."/>
            <person name="Cella M."/>
            <person name="Colonna M."/>
        </authorList>
    </citation>
    <scope>NUCLEOTIDE SEQUENCE [MRNA] (ISOFORM 1)</scope>
    <scope>FUNCTION</scope>
    <scope>INTERACTION WITH PTPN11</scope>
    <scope>TISSUE SPECIFICITY</scope>
    <scope>DOMAIN</scope>
    <scope>PHOSPHORYLATION AT TYR-371</scope>
    <scope>MUTAGENESIS OF TYR-356 AND TYR-371</scope>
</reference>
<reference key="2">
    <citation type="submission" date="2004-06" db="EMBL/GenBank/DDBJ databases">
        <title>Human FcR-like transmembrane receptor IFGP6.</title>
        <authorList>
            <person name="Ershova S.A."/>
        </authorList>
    </citation>
    <scope>NUCLEOTIDE SEQUENCE [MRNA] (ISOFORMS 1; 3 AND 4)</scope>
    <source>
        <tissue>Tonsil</tissue>
    </source>
</reference>
<reference key="3">
    <citation type="journal article" date="2004" name="Nat. Genet.">
        <title>Complete sequencing and characterization of 21,243 full-length human cDNAs.</title>
        <authorList>
            <person name="Ota T."/>
            <person name="Suzuki Y."/>
            <person name="Nishikawa T."/>
            <person name="Otsuki T."/>
            <person name="Sugiyama T."/>
            <person name="Irie R."/>
            <person name="Wakamatsu A."/>
            <person name="Hayashi K."/>
            <person name="Sato H."/>
            <person name="Nagai K."/>
            <person name="Kimura K."/>
            <person name="Makita H."/>
            <person name="Sekine M."/>
            <person name="Obayashi M."/>
            <person name="Nishi T."/>
            <person name="Shibahara T."/>
            <person name="Tanaka T."/>
            <person name="Ishii S."/>
            <person name="Yamamoto J."/>
            <person name="Saito K."/>
            <person name="Kawai Y."/>
            <person name="Isono Y."/>
            <person name="Nakamura Y."/>
            <person name="Nagahari K."/>
            <person name="Murakami K."/>
            <person name="Yasuda T."/>
            <person name="Iwayanagi T."/>
            <person name="Wagatsuma M."/>
            <person name="Shiratori A."/>
            <person name="Sudo H."/>
            <person name="Hosoiri T."/>
            <person name="Kaku Y."/>
            <person name="Kodaira H."/>
            <person name="Kondo H."/>
            <person name="Sugawara M."/>
            <person name="Takahashi M."/>
            <person name="Kanda K."/>
            <person name="Yokoi T."/>
            <person name="Furuya T."/>
            <person name="Kikkawa E."/>
            <person name="Omura Y."/>
            <person name="Abe K."/>
            <person name="Kamihara K."/>
            <person name="Katsuta N."/>
            <person name="Sato K."/>
            <person name="Tanikawa M."/>
            <person name="Yamazaki M."/>
            <person name="Ninomiya K."/>
            <person name="Ishibashi T."/>
            <person name="Yamashita H."/>
            <person name="Murakawa K."/>
            <person name="Fujimori K."/>
            <person name="Tanai H."/>
            <person name="Kimata M."/>
            <person name="Watanabe M."/>
            <person name="Hiraoka S."/>
            <person name="Chiba Y."/>
            <person name="Ishida S."/>
            <person name="Ono Y."/>
            <person name="Takiguchi S."/>
            <person name="Watanabe S."/>
            <person name="Yosida M."/>
            <person name="Hotuta T."/>
            <person name="Kusano J."/>
            <person name="Kanehori K."/>
            <person name="Takahashi-Fujii A."/>
            <person name="Hara H."/>
            <person name="Tanase T.-O."/>
            <person name="Nomura Y."/>
            <person name="Togiya S."/>
            <person name="Komai F."/>
            <person name="Hara R."/>
            <person name="Takeuchi K."/>
            <person name="Arita M."/>
            <person name="Imose N."/>
            <person name="Musashino K."/>
            <person name="Yuuki H."/>
            <person name="Oshima A."/>
            <person name="Sasaki N."/>
            <person name="Aotsuka S."/>
            <person name="Yoshikawa Y."/>
            <person name="Matsunawa H."/>
            <person name="Ichihara T."/>
            <person name="Shiohata N."/>
            <person name="Sano S."/>
            <person name="Moriya S."/>
            <person name="Momiyama H."/>
            <person name="Satoh N."/>
            <person name="Takami S."/>
            <person name="Terashima Y."/>
            <person name="Suzuki O."/>
            <person name="Nakagawa S."/>
            <person name="Senoh A."/>
            <person name="Mizoguchi H."/>
            <person name="Goto Y."/>
            <person name="Shimizu F."/>
            <person name="Wakebe H."/>
            <person name="Hishigaki H."/>
            <person name="Watanabe T."/>
            <person name="Sugiyama A."/>
            <person name="Takemoto M."/>
            <person name="Kawakami B."/>
            <person name="Yamazaki M."/>
            <person name="Watanabe K."/>
            <person name="Kumagai A."/>
            <person name="Itakura S."/>
            <person name="Fukuzumi Y."/>
            <person name="Fujimori Y."/>
            <person name="Komiyama M."/>
            <person name="Tashiro H."/>
            <person name="Tanigami A."/>
            <person name="Fujiwara T."/>
            <person name="Ono T."/>
            <person name="Yamada K."/>
            <person name="Fujii Y."/>
            <person name="Ozaki K."/>
            <person name="Hirao M."/>
            <person name="Ohmori Y."/>
            <person name="Kawabata A."/>
            <person name="Hikiji T."/>
            <person name="Kobatake N."/>
            <person name="Inagaki H."/>
            <person name="Ikema Y."/>
            <person name="Okamoto S."/>
            <person name="Okitani R."/>
            <person name="Kawakami T."/>
            <person name="Noguchi S."/>
            <person name="Itoh T."/>
            <person name="Shigeta K."/>
            <person name="Senba T."/>
            <person name="Matsumura K."/>
            <person name="Nakajima Y."/>
            <person name="Mizuno T."/>
            <person name="Morinaga M."/>
            <person name="Sasaki M."/>
            <person name="Togashi T."/>
            <person name="Oyama M."/>
            <person name="Hata H."/>
            <person name="Watanabe M."/>
            <person name="Komatsu T."/>
            <person name="Mizushima-Sugano J."/>
            <person name="Satoh T."/>
            <person name="Shirai Y."/>
            <person name="Takahashi Y."/>
            <person name="Nakagawa K."/>
            <person name="Okumura K."/>
            <person name="Nagase T."/>
            <person name="Nomura N."/>
            <person name="Kikuchi H."/>
            <person name="Masuho Y."/>
            <person name="Yamashita R."/>
            <person name="Nakai K."/>
            <person name="Yada T."/>
            <person name="Nakamura Y."/>
            <person name="Ohara O."/>
            <person name="Isogai T."/>
            <person name="Sugano S."/>
        </authorList>
    </citation>
    <scope>NUCLEOTIDE SEQUENCE [LARGE SCALE MRNA] (ISOFORM 2)</scope>
    <source>
        <tissue>Spleen</tissue>
    </source>
</reference>
<reference key="4">
    <citation type="journal article" date="2006" name="Nature">
        <title>The DNA sequence and biological annotation of human chromosome 1.</title>
        <authorList>
            <person name="Gregory S.G."/>
            <person name="Barlow K.F."/>
            <person name="McLay K.E."/>
            <person name="Kaul R."/>
            <person name="Swarbreck D."/>
            <person name="Dunham A."/>
            <person name="Scott C.E."/>
            <person name="Howe K.L."/>
            <person name="Woodfine K."/>
            <person name="Spencer C.C.A."/>
            <person name="Jones M.C."/>
            <person name="Gillson C."/>
            <person name="Searle S."/>
            <person name="Zhou Y."/>
            <person name="Kokocinski F."/>
            <person name="McDonald L."/>
            <person name="Evans R."/>
            <person name="Phillips K."/>
            <person name="Atkinson A."/>
            <person name="Cooper R."/>
            <person name="Jones C."/>
            <person name="Hall R.E."/>
            <person name="Andrews T.D."/>
            <person name="Lloyd C."/>
            <person name="Ainscough R."/>
            <person name="Almeida J.P."/>
            <person name="Ambrose K.D."/>
            <person name="Anderson F."/>
            <person name="Andrew R.W."/>
            <person name="Ashwell R.I.S."/>
            <person name="Aubin K."/>
            <person name="Babbage A.K."/>
            <person name="Bagguley C.L."/>
            <person name="Bailey J."/>
            <person name="Beasley H."/>
            <person name="Bethel G."/>
            <person name="Bird C.P."/>
            <person name="Bray-Allen S."/>
            <person name="Brown J.Y."/>
            <person name="Brown A.J."/>
            <person name="Buckley D."/>
            <person name="Burton J."/>
            <person name="Bye J."/>
            <person name="Carder C."/>
            <person name="Chapman J.C."/>
            <person name="Clark S.Y."/>
            <person name="Clarke G."/>
            <person name="Clee C."/>
            <person name="Cobley V."/>
            <person name="Collier R.E."/>
            <person name="Corby N."/>
            <person name="Coville G.J."/>
            <person name="Davies J."/>
            <person name="Deadman R."/>
            <person name="Dunn M."/>
            <person name="Earthrowl M."/>
            <person name="Ellington A.G."/>
            <person name="Errington H."/>
            <person name="Frankish A."/>
            <person name="Frankland J."/>
            <person name="French L."/>
            <person name="Garner P."/>
            <person name="Garnett J."/>
            <person name="Gay L."/>
            <person name="Ghori M.R.J."/>
            <person name="Gibson R."/>
            <person name="Gilby L.M."/>
            <person name="Gillett W."/>
            <person name="Glithero R.J."/>
            <person name="Grafham D.V."/>
            <person name="Griffiths C."/>
            <person name="Griffiths-Jones S."/>
            <person name="Grocock R."/>
            <person name="Hammond S."/>
            <person name="Harrison E.S.I."/>
            <person name="Hart E."/>
            <person name="Haugen E."/>
            <person name="Heath P.D."/>
            <person name="Holmes S."/>
            <person name="Holt K."/>
            <person name="Howden P.J."/>
            <person name="Hunt A.R."/>
            <person name="Hunt S.E."/>
            <person name="Hunter G."/>
            <person name="Isherwood J."/>
            <person name="James R."/>
            <person name="Johnson C."/>
            <person name="Johnson D."/>
            <person name="Joy A."/>
            <person name="Kay M."/>
            <person name="Kershaw J.K."/>
            <person name="Kibukawa M."/>
            <person name="Kimberley A.M."/>
            <person name="King A."/>
            <person name="Knights A.J."/>
            <person name="Lad H."/>
            <person name="Laird G."/>
            <person name="Lawlor S."/>
            <person name="Leongamornlert D.A."/>
            <person name="Lloyd D.M."/>
            <person name="Loveland J."/>
            <person name="Lovell J."/>
            <person name="Lush M.J."/>
            <person name="Lyne R."/>
            <person name="Martin S."/>
            <person name="Mashreghi-Mohammadi M."/>
            <person name="Matthews L."/>
            <person name="Matthews N.S.W."/>
            <person name="McLaren S."/>
            <person name="Milne S."/>
            <person name="Mistry S."/>
            <person name="Moore M.J.F."/>
            <person name="Nickerson T."/>
            <person name="O'Dell C.N."/>
            <person name="Oliver K."/>
            <person name="Palmeiri A."/>
            <person name="Palmer S.A."/>
            <person name="Parker A."/>
            <person name="Patel D."/>
            <person name="Pearce A.V."/>
            <person name="Peck A.I."/>
            <person name="Pelan S."/>
            <person name="Phelps K."/>
            <person name="Phillimore B.J."/>
            <person name="Plumb R."/>
            <person name="Rajan J."/>
            <person name="Raymond C."/>
            <person name="Rouse G."/>
            <person name="Saenphimmachak C."/>
            <person name="Sehra H.K."/>
            <person name="Sheridan E."/>
            <person name="Shownkeen R."/>
            <person name="Sims S."/>
            <person name="Skuce C.D."/>
            <person name="Smith M."/>
            <person name="Steward C."/>
            <person name="Subramanian S."/>
            <person name="Sycamore N."/>
            <person name="Tracey A."/>
            <person name="Tromans A."/>
            <person name="Van Helmond Z."/>
            <person name="Wall M."/>
            <person name="Wallis J.M."/>
            <person name="White S."/>
            <person name="Whitehead S.L."/>
            <person name="Wilkinson J.E."/>
            <person name="Willey D.L."/>
            <person name="Williams H."/>
            <person name="Wilming L."/>
            <person name="Wray P.W."/>
            <person name="Wu Z."/>
            <person name="Coulson A."/>
            <person name="Vaudin M."/>
            <person name="Sulston J.E."/>
            <person name="Durbin R.M."/>
            <person name="Hubbard T."/>
            <person name="Wooster R."/>
            <person name="Dunham I."/>
            <person name="Carter N.P."/>
            <person name="McVean G."/>
            <person name="Ross M.T."/>
            <person name="Harrow J."/>
            <person name="Olson M.V."/>
            <person name="Beck S."/>
            <person name="Rogers J."/>
            <person name="Bentley D.R."/>
        </authorList>
    </citation>
    <scope>NUCLEOTIDE SEQUENCE [LARGE SCALE GENOMIC DNA]</scope>
</reference>
<reference key="5">
    <citation type="journal article" date="2008" name="Eur. J. Immunol.">
        <title>FCRL6 distinguishes mature cytotoxic lymphocytes and is upregulated in patients with B-cell chronic lymphocytic leukemia.</title>
        <authorList>
            <person name="Schreeder D.M."/>
            <person name="Pan J."/>
            <person name="Li F.J."/>
            <person name="Vivier E."/>
            <person name="Davis R.S."/>
        </authorList>
    </citation>
    <scope>FUNCTION</scope>
    <scope>SUBCELLULAR LOCATION</scope>
    <scope>TISSUE SPECIFICITY</scope>
    <scope>PHOSPHORYLATION</scope>
</reference>
<reference key="6">
    <citation type="journal article" date="2010" name="J. Immunol.">
        <title>FcR-like 6 is an MHC class II receptor.</title>
        <authorList>
            <person name="Schreeder D.M."/>
            <person name="Cannon J.P."/>
            <person name="Wu J."/>
            <person name="Li R."/>
            <person name="Shakhmatov M.A."/>
            <person name="Davis R.S."/>
        </authorList>
    </citation>
    <scope>FUNCTION</scope>
    <scope>INTERACTION WITH HLA-DR</scope>
</reference>
<reference key="7">
    <citation type="journal article" date="2011" name="Immunol. Lett.">
        <title>FCRL6 receptor: expression and associated proteins.</title>
        <authorList>
            <person name="Kulemzin S.V."/>
            <person name="Zamoshnikova A.Y."/>
            <person name="Yurchenko M.Y."/>
            <person name="Vitak N.Y."/>
            <person name="Najakshin A.M."/>
            <person name="Fayngerts S.A."/>
            <person name="Chikaev N.A."/>
            <person name="Reshetnikova E.S."/>
            <person name="Kashirina N.M."/>
            <person name="Peclo M.M."/>
            <person name="Rutkevich P.N."/>
            <person name="Shevelev A.Y."/>
            <person name="Yanushevskaya E.V."/>
            <person name="Baranov K.O."/>
            <person name="Mamonkin M."/>
            <person name="Vlasik T.N."/>
            <person name="Sidorenko S.P."/>
            <person name="Taranin A.V."/>
            <person name="Mechetina L.V."/>
        </authorList>
    </citation>
    <scope>INTERACTION WITH PTPN6; PTPN11; INPP5D; INPPL1 AND GRB2</scope>
    <scope>SUBCELLULAR LOCATION</scope>
    <scope>TISSUE SPECIFICITY</scope>
    <scope>ALTERNATIVE SPLICING</scope>
    <scope>INDUCTION</scope>
    <scope>MUTAGENESIS OF TYR-356 AND TYR-371</scope>
</reference>
<protein>
    <recommendedName>
        <fullName>Fc receptor-like protein 6</fullName>
        <shortName>FcR-like protein 6</shortName>
        <shortName>FcRL6</shortName>
    </recommendedName>
    <alternativeName>
        <fullName>Fc receptor homolog 6</fullName>
        <shortName>FcRH6</shortName>
    </alternativeName>
    <alternativeName>
        <fullName>IFGP6</fullName>
    </alternativeName>
</protein>
<gene>
    <name type="primary">FCRL6</name>
    <name type="synonym">FCRH6</name>
</gene>
<keyword id="KW-0025">Alternative splicing</keyword>
<keyword id="KW-1003">Cell membrane</keyword>
<keyword id="KW-1015">Disulfide bond</keyword>
<keyword id="KW-0325">Glycoprotein</keyword>
<keyword id="KW-0393">Immunoglobulin domain</keyword>
<keyword id="KW-0472">Membrane</keyword>
<keyword id="KW-0597">Phosphoprotein</keyword>
<keyword id="KW-1267">Proteomics identification</keyword>
<keyword id="KW-0675">Receptor</keyword>
<keyword id="KW-1185">Reference proteome</keyword>
<keyword id="KW-0677">Repeat</keyword>
<keyword id="KW-0732">Signal</keyword>
<keyword id="KW-0812">Transmembrane</keyword>
<keyword id="KW-1133">Transmembrane helix</keyword>